<name>ATPL_STAA3</name>
<accession>Q2FF19</accession>
<dbReference type="EMBL" id="CP000255">
    <property type="protein sequence ID" value="ABD22522.1"/>
    <property type="molecule type" value="Genomic_DNA"/>
</dbReference>
<dbReference type="RefSeq" id="WP_001048816.1">
    <property type="nucleotide sequence ID" value="NZ_CP027476.1"/>
</dbReference>
<dbReference type="SMR" id="Q2FF19"/>
<dbReference type="GeneID" id="98346415"/>
<dbReference type="KEGG" id="saa:SAUSA300_2063"/>
<dbReference type="HOGENOM" id="CLU_148047_1_1_9"/>
<dbReference type="OMA" id="QPELMNE"/>
<dbReference type="Proteomes" id="UP000001939">
    <property type="component" value="Chromosome"/>
</dbReference>
<dbReference type="GO" id="GO:0005886">
    <property type="term" value="C:plasma membrane"/>
    <property type="evidence" value="ECO:0007669"/>
    <property type="project" value="UniProtKB-SubCell"/>
</dbReference>
<dbReference type="GO" id="GO:0045259">
    <property type="term" value="C:proton-transporting ATP synthase complex"/>
    <property type="evidence" value="ECO:0007669"/>
    <property type="project" value="UniProtKB-KW"/>
</dbReference>
<dbReference type="GO" id="GO:0033177">
    <property type="term" value="C:proton-transporting two-sector ATPase complex, proton-transporting domain"/>
    <property type="evidence" value="ECO:0007669"/>
    <property type="project" value="InterPro"/>
</dbReference>
<dbReference type="GO" id="GO:0008289">
    <property type="term" value="F:lipid binding"/>
    <property type="evidence" value="ECO:0007669"/>
    <property type="project" value="UniProtKB-KW"/>
</dbReference>
<dbReference type="GO" id="GO:0046933">
    <property type="term" value="F:proton-transporting ATP synthase activity, rotational mechanism"/>
    <property type="evidence" value="ECO:0007669"/>
    <property type="project" value="UniProtKB-UniRule"/>
</dbReference>
<dbReference type="CDD" id="cd18185">
    <property type="entry name" value="ATP-synt_Fo_c_ATPE"/>
    <property type="match status" value="1"/>
</dbReference>
<dbReference type="FunFam" id="1.20.20.10:FF:000004">
    <property type="entry name" value="ATP synthase subunit c"/>
    <property type="match status" value="1"/>
</dbReference>
<dbReference type="Gene3D" id="1.20.20.10">
    <property type="entry name" value="F1F0 ATP synthase subunit C"/>
    <property type="match status" value="1"/>
</dbReference>
<dbReference type="HAMAP" id="MF_01396">
    <property type="entry name" value="ATP_synth_c_bact"/>
    <property type="match status" value="1"/>
</dbReference>
<dbReference type="InterPro" id="IPR005953">
    <property type="entry name" value="ATP_synth_csu_bac/chlpt"/>
</dbReference>
<dbReference type="InterPro" id="IPR000454">
    <property type="entry name" value="ATP_synth_F0_csu"/>
</dbReference>
<dbReference type="InterPro" id="IPR020537">
    <property type="entry name" value="ATP_synth_F0_csu_DDCD_BS"/>
</dbReference>
<dbReference type="InterPro" id="IPR038662">
    <property type="entry name" value="ATP_synth_F0_csu_sf"/>
</dbReference>
<dbReference type="InterPro" id="IPR002379">
    <property type="entry name" value="ATPase_proteolipid_c-like_dom"/>
</dbReference>
<dbReference type="InterPro" id="IPR035921">
    <property type="entry name" value="F/V-ATP_Csub_sf"/>
</dbReference>
<dbReference type="NCBIfam" id="TIGR01260">
    <property type="entry name" value="ATP_synt_c"/>
    <property type="match status" value="1"/>
</dbReference>
<dbReference type="NCBIfam" id="NF005363">
    <property type="entry name" value="PRK06876.1"/>
    <property type="match status" value="1"/>
</dbReference>
<dbReference type="Pfam" id="PF00137">
    <property type="entry name" value="ATP-synt_C"/>
    <property type="match status" value="1"/>
</dbReference>
<dbReference type="PRINTS" id="PR00124">
    <property type="entry name" value="ATPASEC"/>
</dbReference>
<dbReference type="SUPFAM" id="SSF81333">
    <property type="entry name" value="F1F0 ATP synthase subunit C"/>
    <property type="match status" value="1"/>
</dbReference>
<dbReference type="PROSITE" id="PS00605">
    <property type="entry name" value="ATPASE_C"/>
    <property type="match status" value="1"/>
</dbReference>
<keyword id="KW-0066">ATP synthesis</keyword>
<keyword id="KW-1003">Cell membrane</keyword>
<keyword id="KW-0138">CF(0)</keyword>
<keyword id="KW-0375">Hydrogen ion transport</keyword>
<keyword id="KW-0406">Ion transport</keyword>
<keyword id="KW-0446">Lipid-binding</keyword>
<keyword id="KW-0472">Membrane</keyword>
<keyword id="KW-0812">Transmembrane</keyword>
<keyword id="KW-1133">Transmembrane helix</keyword>
<keyword id="KW-0813">Transport</keyword>
<comment type="function">
    <text evidence="1">F(1)F(0) ATP synthase produces ATP from ADP in the presence of a proton or sodium gradient. F-type ATPases consist of two structural domains, F(1) containing the extramembraneous catalytic core and F(0) containing the membrane proton channel, linked together by a central stalk and a peripheral stalk. During catalysis, ATP synthesis in the catalytic domain of F(1) is coupled via a rotary mechanism of the central stalk subunits to proton translocation.</text>
</comment>
<comment type="function">
    <text evidence="1">Key component of the F(0) channel; it plays a direct role in translocation across the membrane. A homomeric c-ring of between 10-14 subunits forms the central stalk rotor element with the F(1) delta and epsilon subunits.</text>
</comment>
<comment type="subunit">
    <text evidence="1">F-type ATPases have 2 components, F(1) - the catalytic core - and F(0) - the membrane proton channel. F(1) has five subunits: alpha(3), beta(3), gamma(1), delta(1), epsilon(1). F(0) has three main subunits: a(1), b(2) and c(10-14). The alpha and beta chains form an alternating ring which encloses part of the gamma chain. F(1) is attached to F(0) by a central stalk formed by the gamma and epsilon chains, while a peripheral stalk is formed by the delta and b chains.</text>
</comment>
<comment type="subcellular location">
    <subcellularLocation>
        <location evidence="1">Cell membrane</location>
        <topology evidence="1">Multi-pass membrane protein</topology>
    </subcellularLocation>
</comment>
<comment type="similarity">
    <text evidence="1">Belongs to the ATPase C chain family.</text>
</comment>
<sequence>MNLIAAAIAIGLSALGAGIGNGLIVSRTVEGVARQPEARGQLMGIMFIGVGLVEALPIIGVVIAFMTFAG</sequence>
<proteinExistence type="inferred from homology"/>
<evidence type="ECO:0000255" key="1">
    <source>
        <dbReference type="HAMAP-Rule" id="MF_01396"/>
    </source>
</evidence>
<protein>
    <recommendedName>
        <fullName evidence="1">ATP synthase subunit c</fullName>
    </recommendedName>
    <alternativeName>
        <fullName evidence="1">ATP synthase F(0) sector subunit c</fullName>
    </alternativeName>
    <alternativeName>
        <fullName evidence="1">F-type ATPase subunit c</fullName>
        <shortName evidence="1">F-ATPase subunit c</shortName>
    </alternativeName>
    <alternativeName>
        <fullName evidence="1">Lipid-binding protein</fullName>
    </alternativeName>
</protein>
<feature type="chain" id="PRO_1000184495" description="ATP synthase subunit c">
    <location>
        <begin position="1"/>
        <end position="70"/>
    </location>
</feature>
<feature type="transmembrane region" description="Helical" evidence="1">
    <location>
        <begin position="4"/>
        <end position="24"/>
    </location>
</feature>
<feature type="transmembrane region" description="Helical" evidence="1">
    <location>
        <begin position="45"/>
        <end position="65"/>
    </location>
</feature>
<feature type="site" description="Reversibly protonated during proton transport" evidence="1">
    <location>
        <position position="54"/>
    </location>
</feature>
<gene>
    <name evidence="1" type="primary">atpE</name>
    <name type="ordered locus">SAUSA300_2063</name>
</gene>
<reference key="1">
    <citation type="journal article" date="2006" name="Lancet">
        <title>Complete genome sequence of USA300, an epidemic clone of community-acquired meticillin-resistant Staphylococcus aureus.</title>
        <authorList>
            <person name="Diep B.A."/>
            <person name="Gill S.R."/>
            <person name="Chang R.F."/>
            <person name="Phan T.H."/>
            <person name="Chen J.H."/>
            <person name="Davidson M.G."/>
            <person name="Lin F."/>
            <person name="Lin J."/>
            <person name="Carleton H.A."/>
            <person name="Mongodin E.F."/>
            <person name="Sensabaugh G.F."/>
            <person name="Perdreau-Remington F."/>
        </authorList>
    </citation>
    <scope>NUCLEOTIDE SEQUENCE [LARGE SCALE GENOMIC DNA]</scope>
    <source>
        <strain>USA300</strain>
    </source>
</reference>
<organism>
    <name type="scientific">Staphylococcus aureus (strain USA300)</name>
    <dbReference type="NCBI Taxonomy" id="367830"/>
    <lineage>
        <taxon>Bacteria</taxon>
        <taxon>Bacillati</taxon>
        <taxon>Bacillota</taxon>
        <taxon>Bacilli</taxon>
        <taxon>Bacillales</taxon>
        <taxon>Staphylococcaceae</taxon>
        <taxon>Staphylococcus</taxon>
    </lineage>
</organism>